<organism>
    <name type="scientific">Dictyostelium discoideum</name>
    <name type="common">Social amoeba</name>
    <dbReference type="NCBI Taxonomy" id="44689"/>
    <lineage>
        <taxon>Eukaryota</taxon>
        <taxon>Amoebozoa</taxon>
        <taxon>Evosea</taxon>
        <taxon>Eumycetozoa</taxon>
        <taxon>Dictyostelia</taxon>
        <taxon>Dictyosteliales</taxon>
        <taxon>Dictyosteliaceae</taxon>
        <taxon>Dictyostelium</taxon>
    </lineage>
</organism>
<evidence type="ECO:0000255" key="1">
    <source>
        <dbReference type="PROSITE-ProRule" id="PRU00035"/>
    </source>
</evidence>
<evidence type="ECO:0000256" key="2">
    <source>
        <dbReference type="SAM" id="MobiDB-lite"/>
    </source>
</evidence>
<gene>
    <name type="ORF">DDB_G0285837</name>
</gene>
<protein>
    <recommendedName>
        <fullName>Bromodomain and WD repeat-containing DDB_G0285837</fullName>
    </recommendedName>
</protein>
<sequence length="2200" mass="250132">MENTENKILDKRKEYEKEIYNKEIDQCDDNNINREINYLVYRWLNSQNGIDKNLVTSLFQDFNKNDLLPKKVNWLGQQENFTSNELNEKYKHIQSDHIKSIFSSYRDLAIQHGHFSKLPFQINTLLGDNAYSMIPKGFNDKKDNDNNGDNNLLNKEKIPDNNNNNNSSSSSSSNSNTNKKKIKVSYLYNRPQVVTPTALQPENTTNTTTTTTATTTTTTTTTTTNNTNVQTTPTNTTNTTLTTPPPQIPILPTTVPDIDIQQQQQQQQQQQQQTISKSKNEDINNNNNILSIQRNRYKSFTMMRFTENPFDFSIPIPVKLSGQEVISKSLKSTSQLPISFYSNFKNSLIVYGHKAPTYCLQFDKSGRLYFTGSDDHLVKVWSTYSGRLIATLRGHLGDITDMCTSFDNSLLATASNDNVIRIWNLNSNQYDSIASLTGHDPSVNNTITSISFLSNPTTRLLVSSDSFGQCKLWNLDKSNHVISLSLNDNGSQSTINTGNINDEQIDTEMITDAEVPILTATTITTAITTTATTATATIATTTTTTTPGKTNEITGTTMNKGGTLIVASVDSSLKIWSTLFNPPKLVNTLEGHPTTILALQYSHGSDAIVSGSYDGTVIIWRHSGGPKWDHVIFNIKNTQRPNQANSHPKKVARSKATFKNVIWSHDDRFIITTDYNMIRVWNSLDGSFHLEMAEHTSEVYVTSCHPFDSRLIMSSGYDSQVILWSIETGEIIKKFVLQEPGFQCQILDGCFSPDGQKFIVTNSTGKWFMFELGLGSDINNLKKLVPNEQYFLTDYHPLIRDANGNVLDELTQTPPHLMPRAMLVNYQGLPYPDHYNFTDQDAIYHLEPYKNTSNYKRDLKIQKEFERREVYTFNQGNPSNIPSHPIVIFVASEPKPQPKKIPKKPRRPWDQIEEEIIDDEIIFPSDPSDEDFNPSDASENSSEDEQQQQHQQQQQDDDDDDDDDEDYDSDGKKMSTRKKSKIKADKRKKRLLKQSKKFTRRNTSPSKFNEIMNTFDLPEDDDNNSNNNNRKAVSNKRLSNKQKKRYNLINDGEIEMDDDDQYLNDNILDSDDNDYEHRNRYDNDEFSGSESYNGSDGGGGGGDDDSDNSSDNSSENDSSANGSDSDYSGSKSNKNKRGDKSKRNKKGKKNVKNKKVQKRGRKKSSTSSSSSTSHNQNHLTASALKKLNDIRKKKEILPVCPKWLSITSTTSETFYSPQVGDFIFYFYQGHTKYLEKFPPNGIESNLDNKSIVNYILNNNNINNNNNNNNNNNNNNNNNNNNNNNGVDDQQINSDDDDSQKIIKKSYQECIIKNLNYFISPDGTHKVVITLLPVFDQQVPPQNQNDESNFYTVIYHVSDIPDYLVLASKVRKSMLTDWTVPNKRFRMFYPASGWYNGTIIEISDSDPLFPNSPWENIKVLWDDTEEEDRVNYWEIDEKFDDDQNPQKIKEIKDENENEKVIENNQQQQQQQPQQQPQQQPIQNNQQLSINNTNVNNNNNNNNNNNNNNNNNNNNNNNNNNNNNSLNGGLVDYSGNNNNNNNNNFNYNSNNNLSMSGILDYTNFNNNNNNFMNYNMYQGNYNGMMMNNNTSNYSYLDPNNSNMYMQTYPQNSTMQNQQQPQLNNIYYNSQLQPTNYNYTNNFNTNYSNFNNSSSNIMNYNTNNNFNSPPTATTSNTTTTTTTTTETSNNNNNNNNNNNNNNNNNNFKDNILRIKIQYVESIEDEKIENLKKEMKEFLENDEITDIYSEPVDLKLYPLYIRFVPHPMDISTIIKRLESSYYRSLDAIYFDAKLIMIDAYVYNKPNTMVAKNSKLVFHRISDILKEAANYTPSDILLQSGGSFDSFTLKSMAADKDDSQLDDEDDSMVSGVTNDDDDDDDNLANNNHGNNKSRNGDGLEGDISISDSEHDNSKTGKNITRSLLSPSEDEGGINVNRTPSKRGRKKANATTTTTTTTTTTSSTPSKRLITGRLTRSRSNQSNEESDDDGFIDDNNSSHQNGGKILDDSDNDDKNQNGTDNDYNDDDDDDDNDGDSTNKKRKSIKNQTEPITKRQRTNRLIFEDEDEDDNNQEEDEEDYQEKPKPKPRSKQTTPKVTTPRKRGRKKIDQSEEEEDEDQSDVNSNNNSDNESGGEDGYSGEDGSESESNNGGDIDDEEFLNLLEKPKSKPKGRGRPSFKNNNNNNNINNNVNLTPSKRGRGRPPKSN</sequence>
<feature type="chain" id="PRO_0000384445" description="Bromodomain and WD repeat-containing DDB_G0285837">
    <location>
        <begin position="1"/>
        <end position="2200"/>
    </location>
</feature>
<feature type="repeat" description="WD 1">
    <location>
        <begin position="352"/>
        <end position="391"/>
    </location>
</feature>
<feature type="repeat" description="WD 2">
    <location>
        <begin position="394"/>
        <end position="433"/>
    </location>
</feature>
<feature type="repeat" description="WD 3">
    <location>
        <begin position="442"/>
        <end position="483"/>
    </location>
</feature>
<feature type="repeat" description="WD 4">
    <location>
        <begin position="548"/>
        <end position="586"/>
    </location>
</feature>
<feature type="repeat" description="WD 5">
    <location>
        <begin position="591"/>
        <end position="630"/>
    </location>
</feature>
<feature type="repeat" description="WD 6">
    <location>
        <begin position="653"/>
        <end position="691"/>
    </location>
</feature>
<feature type="repeat" description="WD 7">
    <location>
        <begin position="694"/>
        <end position="736"/>
    </location>
</feature>
<feature type="repeat" description="WD 8">
    <location>
        <begin position="741"/>
        <end position="780"/>
    </location>
</feature>
<feature type="domain" description="Bromo" evidence="1">
    <location>
        <begin position="1722"/>
        <end position="1823"/>
    </location>
</feature>
<feature type="region of interest" description="Disordered" evidence="2">
    <location>
        <begin position="137"/>
        <end position="178"/>
    </location>
</feature>
<feature type="region of interest" description="Disordered" evidence="2">
    <location>
        <begin position="194"/>
        <end position="245"/>
    </location>
</feature>
<feature type="region of interest" description="Disordered" evidence="2">
    <location>
        <begin position="259"/>
        <end position="288"/>
    </location>
</feature>
<feature type="region of interest" description="Disordered" evidence="2">
    <location>
        <begin position="918"/>
        <end position="1180"/>
    </location>
</feature>
<feature type="region of interest" description="Disordered" evidence="2">
    <location>
        <begin position="1262"/>
        <end position="1297"/>
    </location>
</feature>
<feature type="region of interest" description="Disordered" evidence="2">
    <location>
        <begin position="1461"/>
        <end position="1538"/>
    </location>
</feature>
<feature type="region of interest" description="Disordered" evidence="2">
    <location>
        <begin position="1662"/>
        <end position="1703"/>
    </location>
</feature>
<feature type="region of interest" description="Disordered" evidence="2">
    <location>
        <begin position="1850"/>
        <end position="2200"/>
    </location>
</feature>
<feature type="compositionally biased region" description="Low complexity" evidence="2">
    <location>
        <begin position="161"/>
        <end position="176"/>
    </location>
</feature>
<feature type="compositionally biased region" description="Low complexity" evidence="2">
    <location>
        <begin position="203"/>
        <end position="242"/>
    </location>
</feature>
<feature type="compositionally biased region" description="Low complexity" evidence="2">
    <location>
        <begin position="259"/>
        <end position="273"/>
    </location>
</feature>
<feature type="compositionally biased region" description="Acidic residues" evidence="2">
    <location>
        <begin position="918"/>
        <end position="933"/>
    </location>
</feature>
<feature type="compositionally biased region" description="Acidic residues" evidence="2">
    <location>
        <begin position="955"/>
        <end position="968"/>
    </location>
</feature>
<feature type="compositionally biased region" description="Basic residues" evidence="2">
    <location>
        <begin position="974"/>
        <end position="1000"/>
    </location>
</feature>
<feature type="compositionally biased region" description="Acidic residues" evidence="2">
    <location>
        <begin position="1052"/>
        <end position="1074"/>
    </location>
</feature>
<feature type="compositionally biased region" description="Low complexity" evidence="2">
    <location>
        <begin position="1109"/>
        <end position="1132"/>
    </location>
</feature>
<feature type="compositionally biased region" description="Basic residues" evidence="2">
    <location>
        <begin position="1133"/>
        <end position="1164"/>
    </location>
</feature>
<feature type="compositionally biased region" description="Low complexity" evidence="2">
    <location>
        <begin position="1262"/>
        <end position="1292"/>
    </location>
</feature>
<feature type="compositionally biased region" description="Low complexity" evidence="2">
    <location>
        <begin position="1461"/>
        <end position="1525"/>
    </location>
</feature>
<feature type="compositionally biased region" description="Low complexity" evidence="2">
    <location>
        <begin position="1878"/>
        <end position="1888"/>
    </location>
</feature>
<feature type="compositionally biased region" description="Polar residues" evidence="2">
    <location>
        <begin position="1910"/>
        <end position="1920"/>
    </location>
</feature>
<feature type="compositionally biased region" description="Low complexity" evidence="2">
    <location>
        <begin position="1945"/>
        <end position="1958"/>
    </location>
</feature>
<feature type="compositionally biased region" description="Acidic residues" evidence="2">
    <location>
        <begin position="2016"/>
        <end position="2028"/>
    </location>
</feature>
<feature type="compositionally biased region" description="Acidic residues" evidence="2">
    <location>
        <begin position="2057"/>
        <end position="2073"/>
    </location>
</feature>
<feature type="compositionally biased region" description="Acidic residues" evidence="2">
    <location>
        <begin position="2104"/>
        <end position="2113"/>
    </location>
</feature>
<feature type="compositionally biased region" description="Low complexity" evidence="2">
    <location>
        <begin position="2114"/>
        <end position="2124"/>
    </location>
</feature>
<feature type="compositionally biased region" description="Acidic residues" evidence="2">
    <location>
        <begin position="2125"/>
        <end position="2138"/>
    </location>
</feature>
<feature type="compositionally biased region" description="Low complexity" evidence="2">
    <location>
        <begin position="2170"/>
        <end position="2185"/>
    </location>
</feature>
<feature type="compositionally biased region" description="Basic residues" evidence="2">
    <location>
        <begin position="2190"/>
        <end position="2200"/>
    </location>
</feature>
<dbReference type="EMBL" id="AAFI02000080">
    <property type="protein sequence ID" value="EAL64540.1"/>
    <property type="molecule type" value="Genomic_DNA"/>
</dbReference>
<dbReference type="RefSeq" id="XP_638029.1">
    <property type="nucleotide sequence ID" value="XM_632937.1"/>
</dbReference>
<dbReference type="SMR" id="Q54MP8"/>
<dbReference type="FunCoup" id="Q54MP8">
    <property type="interactions" value="102"/>
</dbReference>
<dbReference type="STRING" id="44689.Q54MP8"/>
<dbReference type="GlyGen" id="Q54MP8">
    <property type="glycosylation" value="1 site"/>
</dbReference>
<dbReference type="PaxDb" id="44689-DDB0220685"/>
<dbReference type="EnsemblProtists" id="EAL64540">
    <property type="protein sequence ID" value="EAL64540"/>
    <property type="gene ID" value="DDB_G0285837"/>
</dbReference>
<dbReference type="GeneID" id="8625294"/>
<dbReference type="KEGG" id="ddi:DDB_G0285837"/>
<dbReference type="dictyBase" id="DDB_G0285837"/>
<dbReference type="VEuPathDB" id="AmoebaDB:DDB_G0285837"/>
<dbReference type="eggNOG" id="KOG0644">
    <property type="taxonomic scope" value="Eukaryota"/>
</dbReference>
<dbReference type="HOGENOM" id="CLU_231215_0_0_1"/>
<dbReference type="InParanoid" id="Q54MP8"/>
<dbReference type="OMA" id="NELFFHT"/>
<dbReference type="Reactome" id="R-DDI-1266695">
    <property type="pathway name" value="Interleukin-7 signaling"/>
</dbReference>
<dbReference type="Reactome" id="R-DDI-3247509">
    <property type="pathway name" value="Chromatin modifying enzymes"/>
</dbReference>
<dbReference type="Reactome" id="R-DDI-9013418">
    <property type="pathway name" value="RHOBTB2 GTPase cycle"/>
</dbReference>
<dbReference type="PRO" id="PR:Q54MP8"/>
<dbReference type="Proteomes" id="UP000002195">
    <property type="component" value="Chromosome 4"/>
</dbReference>
<dbReference type="GO" id="GO:0005634">
    <property type="term" value="C:nucleus"/>
    <property type="evidence" value="ECO:0000318"/>
    <property type="project" value="GO_Central"/>
</dbReference>
<dbReference type="GO" id="GO:0007010">
    <property type="term" value="P:cytoskeleton organization"/>
    <property type="evidence" value="ECO:0000318"/>
    <property type="project" value="GO_Central"/>
</dbReference>
<dbReference type="GO" id="GO:0008360">
    <property type="term" value="P:regulation of cell shape"/>
    <property type="evidence" value="ECO:0000318"/>
    <property type="project" value="GO_Central"/>
</dbReference>
<dbReference type="GO" id="GO:0006357">
    <property type="term" value="P:regulation of transcription by RNA polymerase II"/>
    <property type="evidence" value="ECO:0000318"/>
    <property type="project" value="GO_Central"/>
</dbReference>
<dbReference type="CDD" id="cd05529">
    <property type="entry name" value="Bromo_WDR9_I_like"/>
    <property type="match status" value="1"/>
</dbReference>
<dbReference type="CDD" id="cd00200">
    <property type="entry name" value="WD40"/>
    <property type="match status" value="1"/>
</dbReference>
<dbReference type="FunFam" id="2.130.10.10:FF:003376">
    <property type="entry name" value="Bromodomain and WD repeat-containing DDB_G0285837"/>
    <property type="match status" value="1"/>
</dbReference>
<dbReference type="Gene3D" id="2.30.30.1040">
    <property type="match status" value="1"/>
</dbReference>
<dbReference type="Gene3D" id="1.20.920.10">
    <property type="entry name" value="Bromodomain-like"/>
    <property type="match status" value="1"/>
</dbReference>
<dbReference type="Gene3D" id="2.130.10.10">
    <property type="entry name" value="YVTN repeat-like/Quinoprotein amine dehydrogenase"/>
    <property type="match status" value="3"/>
</dbReference>
<dbReference type="InterPro" id="IPR010525">
    <property type="entry name" value="ARF_dom"/>
</dbReference>
<dbReference type="InterPro" id="IPR052060">
    <property type="entry name" value="Bromo_WD_repeat"/>
</dbReference>
<dbReference type="InterPro" id="IPR001487">
    <property type="entry name" value="Bromodomain"/>
</dbReference>
<dbReference type="InterPro" id="IPR036427">
    <property type="entry name" value="Bromodomain-like_sf"/>
</dbReference>
<dbReference type="InterPro" id="IPR015943">
    <property type="entry name" value="WD40/YVTN_repeat-like_dom_sf"/>
</dbReference>
<dbReference type="InterPro" id="IPR019775">
    <property type="entry name" value="WD40_repeat_CS"/>
</dbReference>
<dbReference type="InterPro" id="IPR036322">
    <property type="entry name" value="WD40_repeat_dom_sf"/>
</dbReference>
<dbReference type="InterPro" id="IPR001680">
    <property type="entry name" value="WD40_rpt"/>
</dbReference>
<dbReference type="PANTHER" id="PTHR16266:SF17">
    <property type="entry name" value="BRWD3"/>
    <property type="match status" value="1"/>
</dbReference>
<dbReference type="PANTHER" id="PTHR16266">
    <property type="entry name" value="WD REPEAT DOMAIN 9"/>
    <property type="match status" value="1"/>
</dbReference>
<dbReference type="Pfam" id="PF06507">
    <property type="entry name" value="ARF_AD"/>
    <property type="match status" value="1"/>
</dbReference>
<dbReference type="Pfam" id="PF00439">
    <property type="entry name" value="Bromodomain"/>
    <property type="match status" value="1"/>
</dbReference>
<dbReference type="Pfam" id="PF25437">
    <property type="entry name" value="BRWD1_N"/>
    <property type="match status" value="1"/>
</dbReference>
<dbReference type="Pfam" id="PF00400">
    <property type="entry name" value="WD40"/>
    <property type="match status" value="4"/>
</dbReference>
<dbReference type="PRINTS" id="PR00503">
    <property type="entry name" value="BROMODOMAIN"/>
</dbReference>
<dbReference type="SMART" id="SM00297">
    <property type="entry name" value="BROMO"/>
    <property type="match status" value="1"/>
</dbReference>
<dbReference type="SMART" id="SM00320">
    <property type="entry name" value="WD40"/>
    <property type="match status" value="8"/>
</dbReference>
<dbReference type="SUPFAM" id="SSF47370">
    <property type="entry name" value="Bromodomain"/>
    <property type="match status" value="1"/>
</dbReference>
<dbReference type="SUPFAM" id="SSF50978">
    <property type="entry name" value="WD40 repeat-like"/>
    <property type="match status" value="1"/>
</dbReference>
<dbReference type="PROSITE" id="PS50014">
    <property type="entry name" value="BROMODOMAIN_2"/>
    <property type="match status" value="1"/>
</dbReference>
<dbReference type="PROSITE" id="PS00678">
    <property type="entry name" value="WD_REPEATS_1"/>
    <property type="match status" value="1"/>
</dbReference>
<dbReference type="PROSITE" id="PS50082">
    <property type="entry name" value="WD_REPEATS_2"/>
    <property type="match status" value="4"/>
</dbReference>
<dbReference type="PROSITE" id="PS50294">
    <property type="entry name" value="WD_REPEATS_REGION"/>
    <property type="match status" value="1"/>
</dbReference>
<keyword id="KW-0103">Bromodomain</keyword>
<keyword id="KW-1185">Reference proteome</keyword>
<keyword id="KW-0677">Repeat</keyword>
<keyword id="KW-0853">WD repeat</keyword>
<reference key="1">
    <citation type="journal article" date="2005" name="Nature">
        <title>The genome of the social amoeba Dictyostelium discoideum.</title>
        <authorList>
            <person name="Eichinger L."/>
            <person name="Pachebat J.A."/>
            <person name="Gloeckner G."/>
            <person name="Rajandream M.A."/>
            <person name="Sucgang R."/>
            <person name="Berriman M."/>
            <person name="Song J."/>
            <person name="Olsen R."/>
            <person name="Szafranski K."/>
            <person name="Xu Q."/>
            <person name="Tunggal B."/>
            <person name="Kummerfeld S."/>
            <person name="Madera M."/>
            <person name="Konfortov B.A."/>
            <person name="Rivero F."/>
            <person name="Bankier A.T."/>
            <person name="Lehmann R."/>
            <person name="Hamlin N."/>
            <person name="Davies R."/>
            <person name="Gaudet P."/>
            <person name="Fey P."/>
            <person name="Pilcher K."/>
            <person name="Chen G."/>
            <person name="Saunders D."/>
            <person name="Sodergren E.J."/>
            <person name="Davis P."/>
            <person name="Kerhornou A."/>
            <person name="Nie X."/>
            <person name="Hall N."/>
            <person name="Anjard C."/>
            <person name="Hemphill L."/>
            <person name="Bason N."/>
            <person name="Farbrother P."/>
            <person name="Desany B."/>
            <person name="Just E."/>
            <person name="Morio T."/>
            <person name="Rost R."/>
            <person name="Churcher C.M."/>
            <person name="Cooper J."/>
            <person name="Haydock S."/>
            <person name="van Driessche N."/>
            <person name="Cronin A."/>
            <person name="Goodhead I."/>
            <person name="Muzny D.M."/>
            <person name="Mourier T."/>
            <person name="Pain A."/>
            <person name="Lu M."/>
            <person name="Harper D."/>
            <person name="Lindsay R."/>
            <person name="Hauser H."/>
            <person name="James K.D."/>
            <person name="Quiles M."/>
            <person name="Madan Babu M."/>
            <person name="Saito T."/>
            <person name="Buchrieser C."/>
            <person name="Wardroper A."/>
            <person name="Felder M."/>
            <person name="Thangavelu M."/>
            <person name="Johnson D."/>
            <person name="Knights A."/>
            <person name="Loulseged H."/>
            <person name="Mungall K.L."/>
            <person name="Oliver K."/>
            <person name="Price C."/>
            <person name="Quail M.A."/>
            <person name="Urushihara H."/>
            <person name="Hernandez J."/>
            <person name="Rabbinowitsch E."/>
            <person name="Steffen D."/>
            <person name="Sanders M."/>
            <person name="Ma J."/>
            <person name="Kohara Y."/>
            <person name="Sharp S."/>
            <person name="Simmonds M.N."/>
            <person name="Spiegler S."/>
            <person name="Tivey A."/>
            <person name="Sugano S."/>
            <person name="White B."/>
            <person name="Walker D."/>
            <person name="Woodward J.R."/>
            <person name="Winckler T."/>
            <person name="Tanaka Y."/>
            <person name="Shaulsky G."/>
            <person name="Schleicher M."/>
            <person name="Weinstock G.M."/>
            <person name="Rosenthal A."/>
            <person name="Cox E.C."/>
            <person name="Chisholm R.L."/>
            <person name="Gibbs R.A."/>
            <person name="Loomis W.F."/>
            <person name="Platzer M."/>
            <person name="Kay R.R."/>
            <person name="Williams J.G."/>
            <person name="Dear P.H."/>
            <person name="Noegel A.A."/>
            <person name="Barrell B.G."/>
            <person name="Kuspa A."/>
        </authorList>
    </citation>
    <scope>NUCLEOTIDE SEQUENCE [LARGE SCALE GENOMIC DNA]</scope>
    <source>
        <strain>AX4</strain>
    </source>
</reference>
<name>Y5837_DICDI</name>
<accession>Q54MP8</accession>
<proteinExistence type="predicted"/>